<sequence length="477" mass="52735">MTTSSNPPNSAAPNQTSGMWGGRFSEATDAFVAEFTASVQFDQRFYKQDIAGSIAHATMLAKVGVLTEAERDDIIEGLSTIRAEIEAGTFEWRIDLEDVHMNIESRLTQRIGITGKKLHTGRSRNDQVATDIRLYLRDEIDDILGLLERLQKGLLGLAAKNVNTIMPGFTHLQTAQPVTFGHHLLAWFEMLVRDTERLQDCRKRVNRMPLGSAALAGTTYPIDRAYTAELLGFEAVSENSLDAVSDRDFAIEFNAAASLIMMHLSRMSEELILWTSAQFKFVNIPDRFCTGSSIMPQKKNPDVPELIRGKSGRVFGDLISLLTLMKGQPLAYNKDNQEDKEPLFDAIDTVRGSLMAFADMIPALVPNVEIMREAALRGFSTATDLADYLVKKGVAFRDAHEIVGKAVALGVAEEKDLSELTLEQLQQFSDLITADVFDKALTLEASVNARDHIGGTSPKQVEAAIARAHKRLEQLYA</sequence>
<organism>
    <name type="scientific">Acinetobacter baumannii (strain SDF)</name>
    <dbReference type="NCBI Taxonomy" id="509170"/>
    <lineage>
        <taxon>Bacteria</taxon>
        <taxon>Pseudomonadati</taxon>
        <taxon>Pseudomonadota</taxon>
        <taxon>Gammaproteobacteria</taxon>
        <taxon>Moraxellales</taxon>
        <taxon>Moraxellaceae</taxon>
        <taxon>Acinetobacter</taxon>
        <taxon>Acinetobacter calcoaceticus/baumannii complex</taxon>
    </lineage>
</organism>
<dbReference type="EC" id="4.3.2.1" evidence="1"/>
<dbReference type="EMBL" id="CU468230">
    <property type="protein sequence ID" value="CAP02541.1"/>
    <property type="molecule type" value="Genomic_DNA"/>
</dbReference>
<dbReference type="SMR" id="B0VMC7"/>
<dbReference type="KEGG" id="abm:ABSDF3271"/>
<dbReference type="HOGENOM" id="CLU_027272_2_3_6"/>
<dbReference type="UniPathway" id="UPA00068">
    <property type="reaction ID" value="UER00114"/>
</dbReference>
<dbReference type="Proteomes" id="UP000001741">
    <property type="component" value="Chromosome"/>
</dbReference>
<dbReference type="GO" id="GO:0005829">
    <property type="term" value="C:cytosol"/>
    <property type="evidence" value="ECO:0007669"/>
    <property type="project" value="TreeGrafter"/>
</dbReference>
<dbReference type="GO" id="GO:0004056">
    <property type="term" value="F:argininosuccinate lyase activity"/>
    <property type="evidence" value="ECO:0007669"/>
    <property type="project" value="UniProtKB-UniRule"/>
</dbReference>
<dbReference type="GO" id="GO:0042450">
    <property type="term" value="P:arginine biosynthetic process via ornithine"/>
    <property type="evidence" value="ECO:0007669"/>
    <property type="project" value="InterPro"/>
</dbReference>
<dbReference type="GO" id="GO:0006526">
    <property type="term" value="P:L-arginine biosynthetic process"/>
    <property type="evidence" value="ECO:0007669"/>
    <property type="project" value="UniProtKB-UniRule"/>
</dbReference>
<dbReference type="CDD" id="cd01359">
    <property type="entry name" value="Argininosuccinate_lyase"/>
    <property type="match status" value="1"/>
</dbReference>
<dbReference type="FunFam" id="1.10.275.10:FF:000002">
    <property type="entry name" value="Argininosuccinate lyase"/>
    <property type="match status" value="1"/>
</dbReference>
<dbReference type="FunFam" id="1.10.40.30:FF:000001">
    <property type="entry name" value="Argininosuccinate lyase"/>
    <property type="match status" value="1"/>
</dbReference>
<dbReference type="FunFam" id="1.20.200.10:FF:000015">
    <property type="entry name" value="argininosuccinate lyase isoform X2"/>
    <property type="match status" value="1"/>
</dbReference>
<dbReference type="Gene3D" id="1.10.40.30">
    <property type="entry name" value="Fumarase/aspartase (C-terminal domain)"/>
    <property type="match status" value="1"/>
</dbReference>
<dbReference type="Gene3D" id="1.20.200.10">
    <property type="entry name" value="Fumarase/aspartase (Central domain)"/>
    <property type="match status" value="1"/>
</dbReference>
<dbReference type="Gene3D" id="1.10.275.10">
    <property type="entry name" value="Fumarase/aspartase (N-terminal domain)"/>
    <property type="match status" value="1"/>
</dbReference>
<dbReference type="HAMAP" id="MF_00006">
    <property type="entry name" value="Arg_succ_lyase"/>
    <property type="match status" value="1"/>
</dbReference>
<dbReference type="InterPro" id="IPR029419">
    <property type="entry name" value="Arg_succ_lyase_C"/>
</dbReference>
<dbReference type="InterPro" id="IPR009049">
    <property type="entry name" value="Argininosuccinate_lyase"/>
</dbReference>
<dbReference type="InterPro" id="IPR024083">
    <property type="entry name" value="Fumarase/histidase_N"/>
</dbReference>
<dbReference type="InterPro" id="IPR020557">
    <property type="entry name" value="Fumarate_lyase_CS"/>
</dbReference>
<dbReference type="InterPro" id="IPR000362">
    <property type="entry name" value="Fumarate_lyase_fam"/>
</dbReference>
<dbReference type="InterPro" id="IPR022761">
    <property type="entry name" value="Fumarate_lyase_N"/>
</dbReference>
<dbReference type="InterPro" id="IPR008948">
    <property type="entry name" value="L-Aspartase-like"/>
</dbReference>
<dbReference type="NCBIfam" id="TIGR00838">
    <property type="entry name" value="argH"/>
    <property type="match status" value="1"/>
</dbReference>
<dbReference type="PANTHER" id="PTHR43814">
    <property type="entry name" value="ARGININOSUCCINATE LYASE"/>
    <property type="match status" value="1"/>
</dbReference>
<dbReference type="PANTHER" id="PTHR43814:SF1">
    <property type="entry name" value="ARGININOSUCCINATE LYASE"/>
    <property type="match status" value="1"/>
</dbReference>
<dbReference type="Pfam" id="PF14698">
    <property type="entry name" value="ASL_C2"/>
    <property type="match status" value="1"/>
</dbReference>
<dbReference type="Pfam" id="PF00206">
    <property type="entry name" value="Lyase_1"/>
    <property type="match status" value="1"/>
</dbReference>
<dbReference type="PRINTS" id="PR00145">
    <property type="entry name" value="ARGSUCLYASE"/>
</dbReference>
<dbReference type="PRINTS" id="PR00149">
    <property type="entry name" value="FUMRATELYASE"/>
</dbReference>
<dbReference type="SUPFAM" id="SSF48557">
    <property type="entry name" value="L-aspartase-like"/>
    <property type="match status" value="1"/>
</dbReference>
<dbReference type="PROSITE" id="PS00163">
    <property type="entry name" value="FUMARATE_LYASES"/>
    <property type="match status" value="1"/>
</dbReference>
<proteinExistence type="inferred from homology"/>
<comment type="catalytic activity">
    <reaction evidence="1">
        <text>2-(N(omega)-L-arginino)succinate = fumarate + L-arginine</text>
        <dbReference type="Rhea" id="RHEA:24020"/>
        <dbReference type="ChEBI" id="CHEBI:29806"/>
        <dbReference type="ChEBI" id="CHEBI:32682"/>
        <dbReference type="ChEBI" id="CHEBI:57472"/>
        <dbReference type="EC" id="4.3.2.1"/>
    </reaction>
</comment>
<comment type="pathway">
    <text evidence="1">Amino-acid biosynthesis; L-arginine biosynthesis; L-arginine from L-ornithine and carbamoyl phosphate: step 3/3.</text>
</comment>
<comment type="subcellular location">
    <subcellularLocation>
        <location evidence="1">Cytoplasm</location>
    </subcellularLocation>
</comment>
<comment type="similarity">
    <text evidence="1">Belongs to the lyase 1 family. Argininosuccinate lyase subfamily.</text>
</comment>
<keyword id="KW-0028">Amino-acid biosynthesis</keyword>
<keyword id="KW-0055">Arginine biosynthesis</keyword>
<keyword id="KW-0963">Cytoplasm</keyword>
<keyword id="KW-0456">Lyase</keyword>
<gene>
    <name evidence="1" type="primary">argH</name>
    <name type="ordered locus">ABSDF3271</name>
</gene>
<evidence type="ECO:0000255" key="1">
    <source>
        <dbReference type="HAMAP-Rule" id="MF_00006"/>
    </source>
</evidence>
<accession>B0VMC7</accession>
<feature type="chain" id="PRO_1000116299" description="Argininosuccinate lyase">
    <location>
        <begin position="1"/>
        <end position="477"/>
    </location>
</feature>
<reference key="1">
    <citation type="journal article" date="2008" name="PLoS ONE">
        <title>Comparative analysis of Acinetobacters: three genomes for three lifestyles.</title>
        <authorList>
            <person name="Vallenet D."/>
            <person name="Nordmann P."/>
            <person name="Barbe V."/>
            <person name="Poirel L."/>
            <person name="Mangenot S."/>
            <person name="Bataille E."/>
            <person name="Dossat C."/>
            <person name="Gas S."/>
            <person name="Kreimeyer A."/>
            <person name="Lenoble P."/>
            <person name="Oztas S."/>
            <person name="Poulain J."/>
            <person name="Segurens B."/>
            <person name="Robert C."/>
            <person name="Abergel C."/>
            <person name="Claverie J.-M."/>
            <person name="Raoult D."/>
            <person name="Medigue C."/>
            <person name="Weissenbach J."/>
            <person name="Cruveiller S."/>
        </authorList>
    </citation>
    <scope>NUCLEOTIDE SEQUENCE [LARGE SCALE GENOMIC DNA]</scope>
    <source>
        <strain>SDF</strain>
    </source>
</reference>
<name>ARLY_ACIBS</name>
<protein>
    <recommendedName>
        <fullName evidence="1">Argininosuccinate lyase</fullName>
        <shortName evidence="1">ASAL</shortName>
        <ecNumber evidence="1">4.3.2.1</ecNumber>
    </recommendedName>
    <alternativeName>
        <fullName evidence="1">Arginosuccinase</fullName>
    </alternativeName>
</protein>